<feature type="chain" id="PRO_0000241993" description="Arginine--tRNA ligase">
    <location>
        <begin position="1"/>
        <end position="585"/>
    </location>
</feature>
<feature type="short sequence motif" description="'HIGH' region">
    <location>
        <begin position="127"/>
        <end position="137"/>
    </location>
</feature>
<gene>
    <name evidence="1" type="primary">argS</name>
    <name type="ordered locus">BG0607</name>
</gene>
<comment type="catalytic activity">
    <reaction evidence="1">
        <text>tRNA(Arg) + L-arginine + ATP = L-arginyl-tRNA(Arg) + AMP + diphosphate</text>
        <dbReference type="Rhea" id="RHEA:20301"/>
        <dbReference type="Rhea" id="RHEA-COMP:9658"/>
        <dbReference type="Rhea" id="RHEA-COMP:9673"/>
        <dbReference type="ChEBI" id="CHEBI:30616"/>
        <dbReference type="ChEBI" id="CHEBI:32682"/>
        <dbReference type="ChEBI" id="CHEBI:33019"/>
        <dbReference type="ChEBI" id="CHEBI:78442"/>
        <dbReference type="ChEBI" id="CHEBI:78513"/>
        <dbReference type="ChEBI" id="CHEBI:456215"/>
        <dbReference type="EC" id="6.1.1.19"/>
    </reaction>
</comment>
<comment type="subunit">
    <text evidence="1">Monomer.</text>
</comment>
<comment type="subcellular location">
    <subcellularLocation>
        <location evidence="1">Cytoplasm</location>
    </subcellularLocation>
</comment>
<comment type="similarity">
    <text evidence="1">Belongs to the class-I aminoacyl-tRNA synthetase family.</text>
</comment>
<keyword id="KW-0030">Aminoacyl-tRNA synthetase</keyword>
<keyword id="KW-0067">ATP-binding</keyword>
<keyword id="KW-0963">Cytoplasm</keyword>
<keyword id="KW-0436">Ligase</keyword>
<keyword id="KW-0547">Nucleotide-binding</keyword>
<keyword id="KW-0648">Protein biosynthesis</keyword>
<evidence type="ECO:0000255" key="1">
    <source>
        <dbReference type="HAMAP-Rule" id="MF_00123"/>
    </source>
</evidence>
<dbReference type="EC" id="6.1.1.19" evidence="1"/>
<dbReference type="EMBL" id="CP000013">
    <property type="protein sequence ID" value="AAU07443.1"/>
    <property type="molecule type" value="Genomic_DNA"/>
</dbReference>
<dbReference type="RefSeq" id="WP_011193901.1">
    <property type="nucleotide sequence ID" value="NZ_CP028872.1"/>
</dbReference>
<dbReference type="SMR" id="Q660S8"/>
<dbReference type="GeneID" id="45161387"/>
<dbReference type="KEGG" id="bga:BG0607"/>
<dbReference type="eggNOG" id="COG0018">
    <property type="taxonomic scope" value="Bacteria"/>
</dbReference>
<dbReference type="HOGENOM" id="CLU_006406_6_1_12"/>
<dbReference type="OrthoDB" id="9805987at2"/>
<dbReference type="Proteomes" id="UP000002276">
    <property type="component" value="Chromosome"/>
</dbReference>
<dbReference type="GO" id="GO:0005737">
    <property type="term" value="C:cytoplasm"/>
    <property type="evidence" value="ECO:0007669"/>
    <property type="project" value="UniProtKB-SubCell"/>
</dbReference>
<dbReference type="GO" id="GO:0004814">
    <property type="term" value="F:arginine-tRNA ligase activity"/>
    <property type="evidence" value="ECO:0007669"/>
    <property type="project" value="UniProtKB-UniRule"/>
</dbReference>
<dbReference type="GO" id="GO:0005524">
    <property type="term" value="F:ATP binding"/>
    <property type="evidence" value="ECO:0007669"/>
    <property type="project" value="UniProtKB-UniRule"/>
</dbReference>
<dbReference type="GO" id="GO:0006420">
    <property type="term" value="P:arginyl-tRNA aminoacylation"/>
    <property type="evidence" value="ECO:0007669"/>
    <property type="project" value="UniProtKB-UniRule"/>
</dbReference>
<dbReference type="CDD" id="cd00671">
    <property type="entry name" value="ArgRS_core"/>
    <property type="match status" value="1"/>
</dbReference>
<dbReference type="FunFam" id="1.10.730.10:FF:000006">
    <property type="entry name" value="Arginyl-tRNA synthetase 2, mitochondrial"/>
    <property type="match status" value="1"/>
</dbReference>
<dbReference type="Gene3D" id="3.30.1360.70">
    <property type="entry name" value="Arginyl tRNA synthetase N-terminal domain"/>
    <property type="match status" value="1"/>
</dbReference>
<dbReference type="Gene3D" id="3.40.50.620">
    <property type="entry name" value="HUPs"/>
    <property type="match status" value="1"/>
</dbReference>
<dbReference type="Gene3D" id="1.10.730.10">
    <property type="entry name" value="Isoleucyl-tRNA Synthetase, Domain 1"/>
    <property type="match status" value="1"/>
</dbReference>
<dbReference type="HAMAP" id="MF_00123">
    <property type="entry name" value="Arg_tRNA_synth"/>
    <property type="match status" value="1"/>
</dbReference>
<dbReference type="InterPro" id="IPR001412">
    <property type="entry name" value="aa-tRNA-synth_I_CS"/>
</dbReference>
<dbReference type="InterPro" id="IPR001278">
    <property type="entry name" value="Arg-tRNA-ligase"/>
</dbReference>
<dbReference type="InterPro" id="IPR005148">
    <property type="entry name" value="Arg-tRNA-synth_N"/>
</dbReference>
<dbReference type="InterPro" id="IPR036695">
    <property type="entry name" value="Arg-tRNA-synth_N_sf"/>
</dbReference>
<dbReference type="InterPro" id="IPR035684">
    <property type="entry name" value="ArgRS_core"/>
</dbReference>
<dbReference type="InterPro" id="IPR008909">
    <property type="entry name" value="DALR_anticod-bd"/>
</dbReference>
<dbReference type="InterPro" id="IPR014729">
    <property type="entry name" value="Rossmann-like_a/b/a_fold"/>
</dbReference>
<dbReference type="InterPro" id="IPR009080">
    <property type="entry name" value="tRNAsynth_Ia_anticodon-bd"/>
</dbReference>
<dbReference type="NCBIfam" id="TIGR00456">
    <property type="entry name" value="argS"/>
    <property type="match status" value="1"/>
</dbReference>
<dbReference type="PANTHER" id="PTHR11956:SF5">
    <property type="entry name" value="ARGININE--TRNA LIGASE, CYTOPLASMIC"/>
    <property type="match status" value="1"/>
</dbReference>
<dbReference type="PANTHER" id="PTHR11956">
    <property type="entry name" value="ARGINYL-TRNA SYNTHETASE"/>
    <property type="match status" value="1"/>
</dbReference>
<dbReference type="Pfam" id="PF03485">
    <property type="entry name" value="Arg_tRNA_synt_N"/>
    <property type="match status" value="1"/>
</dbReference>
<dbReference type="Pfam" id="PF05746">
    <property type="entry name" value="DALR_1"/>
    <property type="match status" value="1"/>
</dbReference>
<dbReference type="Pfam" id="PF00750">
    <property type="entry name" value="tRNA-synt_1d"/>
    <property type="match status" value="1"/>
</dbReference>
<dbReference type="PRINTS" id="PR01038">
    <property type="entry name" value="TRNASYNTHARG"/>
</dbReference>
<dbReference type="SMART" id="SM01016">
    <property type="entry name" value="Arg_tRNA_synt_N"/>
    <property type="match status" value="1"/>
</dbReference>
<dbReference type="SMART" id="SM00836">
    <property type="entry name" value="DALR_1"/>
    <property type="match status" value="1"/>
</dbReference>
<dbReference type="SUPFAM" id="SSF47323">
    <property type="entry name" value="Anticodon-binding domain of a subclass of class I aminoacyl-tRNA synthetases"/>
    <property type="match status" value="1"/>
</dbReference>
<dbReference type="SUPFAM" id="SSF55190">
    <property type="entry name" value="Arginyl-tRNA synthetase (ArgRS), N-terminal 'additional' domain"/>
    <property type="match status" value="1"/>
</dbReference>
<dbReference type="SUPFAM" id="SSF52374">
    <property type="entry name" value="Nucleotidylyl transferase"/>
    <property type="match status" value="1"/>
</dbReference>
<dbReference type="PROSITE" id="PS00178">
    <property type="entry name" value="AA_TRNA_LIGASE_I"/>
    <property type="match status" value="1"/>
</dbReference>
<name>SYR_BORGP</name>
<reference key="1">
    <citation type="journal article" date="2004" name="Nucleic Acids Res.">
        <title>Comparative analysis of the Borrelia garinii genome.</title>
        <authorList>
            <person name="Gloeckner G."/>
            <person name="Lehmann R."/>
            <person name="Romualdi A."/>
            <person name="Pradella S."/>
            <person name="Schulte-Spechtel U."/>
            <person name="Schilhabel M."/>
            <person name="Wilske B."/>
            <person name="Suehnel J."/>
            <person name="Platzer M."/>
        </authorList>
    </citation>
    <scope>NUCLEOTIDE SEQUENCE [LARGE SCALE GENOMIC DNA]</scope>
    <source>
        <strain>ATCC BAA-2496 / DSM 23469 / PBi</strain>
    </source>
</reference>
<protein>
    <recommendedName>
        <fullName evidence="1">Arginine--tRNA ligase</fullName>
        <ecNumber evidence="1">6.1.1.19</ecNumber>
    </recommendedName>
    <alternativeName>
        <fullName evidence="1">Arginyl-tRNA synthetase</fullName>
        <shortName evidence="1">ArgRS</shortName>
    </alternativeName>
</protein>
<proteinExistence type="inferred from homology"/>
<organism>
    <name type="scientific">Borrelia garinii subsp. bavariensis (strain ATCC BAA-2496 / DSM 23469 / PBi)</name>
    <name type="common">Borreliella bavariensis</name>
    <dbReference type="NCBI Taxonomy" id="290434"/>
    <lineage>
        <taxon>Bacteria</taxon>
        <taxon>Pseudomonadati</taxon>
        <taxon>Spirochaetota</taxon>
        <taxon>Spirochaetia</taxon>
        <taxon>Spirochaetales</taxon>
        <taxon>Borreliaceae</taxon>
        <taxon>Borreliella</taxon>
    </lineage>
</organism>
<accession>Q660S8</accession>
<sequence>MTKSVKKNIKNEISIIVANLALSKNIKLDKININIQKPPKSDLGDISILIFELSKTLELPIATISEEIIKTLKSKYEIKAMGPYLNIKIPRKEYINNTIQMVNAQKDSYGTSKYLDNKKIILEFSSPNTNKPLHVGHLRNDAIGESLSRILKAVGAKITKINLINDRGVHICKSMLAYKKFGNCITPEKAFKKGDHLIGEFYVEYNKYSQENENAEKEIQDLLLKWEQKDKNTIELWEKLNKWAIEGIKETYKTTNISFDKIYLESEIFEIGKNVVLEGLEKGFCYKREDGAICIDLPSDSDEKAEAKAKQKVLIRSNGTSIYLTQDLGNIAIRTKEFNFDEMIYVVGSEQIQHFKNLFFVSEKLGISKNKQLIHLSHGMVNLIDGKMKSREGNVIDGDNLILELIESIMPEITQKIDNKENAKKNALNIALGAIHYYLLKSAVHKDIVFNKKESLSFTGNSGPYIQYVGARINSILEKYNALSIPIIKKINFELLKHEKEWEIIKIISELEENIIKAAKDLNPSILTNYSYSLAKHFSAYYQEVKVIDINNTDLTAARIEFLKTILQTIKNCMHLLNIPYMLKM</sequence>